<name>P30II_HTL1A</name>
<proteinExistence type="evidence at protein level"/>
<feature type="chain" id="PRO_0000259954" description="Accessory protein p30II">
    <location>
        <begin position="1"/>
        <end position="241"/>
    </location>
</feature>
<feature type="region of interest" description="Disordered" evidence="2">
    <location>
        <begin position="79"/>
        <end position="151"/>
    </location>
</feature>
<feature type="short sequence motif" description="Nuclear localization signal 1" evidence="1">
    <location>
        <begin position="73"/>
        <end position="78"/>
    </location>
</feature>
<feature type="short sequence motif" description="Nuclear localization signal 2" evidence="1">
    <location>
        <begin position="91"/>
        <end position="98"/>
    </location>
</feature>
<feature type="short sequence motif" description="Mitochondrial targeting signal">
    <location>
        <begin position="175"/>
        <end position="184"/>
    </location>
</feature>
<feature type="compositionally biased region" description="Low complexity" evidence="2">
    <location>
        <begin position="79"/>
        <end position="100"/>
    </location>
</feature>
<feature type="compositionally biased region" description="Low complexity" evidence="2">
    <location>
        <begin position="107"/>
        <end position="136"/>
    </location>
</feature>
<feature type="splice variant" id="VSP_021563" description="In isoform p13II." evidence="5">
    <location>
        <begin position="1"/>
        <end position="154"/>
    </location>
</feature>
<feature type="sequence variant" description="In strain: Isolate LAF.">
    <original>L</original>
    <variation>R</variation>
    <location>
        <position position="27"/>
    </location>
</feature>
<feature type="sequence variant" description="In strain: Isolate LAF.">
    <original>V</original>
    <variation>I</variation>
    <location>
        <position position="54"/>
    </location>
</feature>
<feature type="sequence variant" description="In strain: Isolate LAF.">
    <original>G</original>
    <variation>R</variation>
    <location>
        <position position="91"/>
    </location>
</feature>
<feature type="sequence variant" description="In strain: Isolate LAF.">
    <original>D</original>
    <variation>G</variation>
    <location>
        <position position="140"/>
    </location>
</feature>
<feature type="sequence variant" description="In strain: Isolate LAF.">
    <original>A</original>
    <variation>T</variation>
    <location>
        <position position="149"/>
    </location>
</feature>
<comment type="function">
    <text>p30II is a multifunctional regulator that sequesters EP300/CREBBP and down-regulates CREB-responsive element (CRE) and Tax-responsive element (TRE) mediated transcription. Specifically binds and represses tax/rex mRNA nuclear export. Since Tax and Rex are positive regulators of viral gene expression, their inhibition by p30II reduces virion production, and allows the virus to escape the host immune surveillance and persist latently in an immune-competent host.</text>
</comment>
<comment type="function">
    <text>p13II increases mitochondrial permeability to monovalent cations, producing a rapid, membrane potential-dependent influx of potassium. This could involve a channel-forming activity. Interferes with cell proliferation and transformation and promotes apoptosis induced by ceramide and Fas ligand, probably using the Ras signaling.</text>
</comment>
<comment type="subunit">
    <text evidence="3">p30II binds to the KIX domains of CREBBP and EP300.</text>
</comment>
<comment type="subcellular location">
    <molecule>Isoform p30II</molecule>
    <subcellularLocation>
        <location evidence="4">Host nucleus</location>
        <location evidence="4">Host nucleolus</location>
    </subcellularLocation>
</comment>
<comment type="subcellular location">
    <molecule>Isoform p13II</molecule>
    <subcellularLocation>
        <location evidence="4">Host mitochondrion inner membrane</location>
    </subcellularLocation>
</comment>
<comment type="alternative products">
    <event type="alternative splicing"/>
    <isoform>
        <id>P0C214-1</id>
        <name>p30II</name>
        <sequence type="displayed"/>
    </isoform>
    <isoform>
        <id>P0C214-2</id>
        <name>p13II</name>
        <sequence type="described" ref="VSP_021563"/>
    </isoform>
</comment>
<comment type="miscellaneous">
    <text>HTLV-1 lineages are divided in four clades, A (Cosmopolitan), B (Central African group), C (Melanesian group) and D (New Central African group).</text>
</comment>
<comment type="similarity">
    <text evidence="6">Belongs to the HTLV-1 accessory protein p30II family.</text>
</comment>
<sequence length="241" mass="26740">MALCCFAFSAPCLHLRSRRSCSSCFLLATSAAFFSARLLRRAFSSSFLFKYSAVCFSSSFSRSFFRFLFSSARRCRSRCVSPRGGAFSPGGPRRSRPRLSSSKDSKPSSTASSSSLSFNSSSKDNSPSTNSSTSRSSGHDTGKHRNSPADTKLTMLIISPLPRVWTESSFRIPSLRVWRLCTRRLVPHLWGTMFGPPTSSRPTGHLSRASDHLGPHRWTRYRLSSTVPYPSTPLLPHPENL</sequence>
<organism>
    <name type="scientific">Human T-cell leukemia virus 1 (strain Japan ATK-1 subtype A)</name>
    <name type="common">HTLV-1</name>
    <dbReference type="NCBI Taxonomy" id="11926"/>
    <lineage>
        <taxon>Viruses</taxon>
        <taxon>Riboviria</taxon>
        <taxon>Pararnavirae</taxon>
        <taxon>Artverviricota</taxon>
        <taxon>Revtraviricetes</taxon>
        <taxon>Ortervirales</taxon>
        <taxon>Retroviridae</taxon>
        <taxon>Orthoretrovirinae</taxon>
        <taxon>Deltaretrovirus</taxon>
        <taxon>Primate T-lymphotropic virus 1</taxon>
    </lineage>
</organism>
<keyword id="KW-0025">Alternative splicing</keyword>
<keyword id="KW-0053">Apoptosis</keyword>
<keyword id="KW-1043">Host membrane</keyword>
<keyword id="KW-1045">Host mitochondrion</keyword>
<keyword id="KW-1046">Host mitochondrion inner membrane</keyword>
<keyword id="KW-1048">Host nucleus</keyword>
<keyword id="KW-0472">Membrane</keyword>
<keyword id="KW-1185">Reference proteome</keyword>
<keyword id="KW-0678">Repressor</keyword>
<dbReference type="EMBL" id="J02029">
    <property type="status" value="NOT_ANNOTATED_CDS"/>
    <property type="molecule type" value="Genomic_DNA"/>
</dbReference>
<dbReference type="EMBL" id="L08432">
    <property type="status" value="NOT_ANNOTATED_CDS"/>
    <property type="molecule type" value="mRNA"/>
</dbReference>
<dbReference type="SMR" id="P0C214"/>
<dbReference type="KEGG" id="ag:P0C214"/>
<dbReference type="Proteomes" id="UP000007683">
    <property type="component" value="Segment"/>
</dbReference>
<dbReference type="GO" id="GO:0044192">
    <property type="term" value="C:host cell mitochondrial inner membrane"/>
    <property type="evidence" value="ECO:0007669"/>
    <property type="project" value="UniProtKB-SubCell"/>
</dbReference>
<dbReference type="GO" id="GO:0044196">
    <property type="term" value="C:host cell nucleolus"/>
    <property type="evidence" value="ECO:0007669"/>
    <property type="project" value="UniProtKB-SubCell"/>
</dbReference>
<dbReference type="GO" id="GO:0016020">
    <property type="term" value="C:membrane"/>
    <property type="evidence" value="ECO:0007669"/>
    <property type="project" value="UniProtKB-KW"/>
</dbReference>
<dbReference type="InterPro" id="IPR008596">
    <property type="entry name" value="P30II"/>
</dbReference>
<dbReference type="Pfam" id="PF05599">
    <property type="entry name" value="Deltaretro_Tax"/>
    <property type="match status" value="1"/>
</dbReference>
<organismHost>
    <name type="scientific">Homo sapiens</name>
    <name type="common">Human</name>
    <dbReference type="NCBI Taxonomy" id="9606"/>
</organismHost>
<protein>
    <recommendedName>
        <fullName>Accessory protein p30II</fullName>
    </recommendedName>
</protein>
<reference key="1">
    <citation type="journal article" date="1983" name="Proc. Natl. Acad. Sci. U.S.A.">
        <title>Human adult T-cell leukemia virus: complete nucleotide sequence of the provirus genome integrated in leukemia cell DNA.</title>
        <authorList>
            <person name="Seiki M."/>
            <person name="Hattori S."/>
            <person name="Hirayama Y."/>
            <person name="Yoshida M.C."/>
        </authorList>
    </citation>
    <scope>NUCLEOTIDE SEQUENCE [GENOMIC DNA]</scope>
</reference>
<reference key="2">
    <citation type="journal article" date="1993" name="J. Virol.">
        <title>The p12I, p13II, and p30II proteins encoded by human T-cell leukemia/lymphotropic virus type I open reading frames I and II are localized in three different cellular compartments.</title>
        <authorList>
            <person name="Koralnik I.J."/>
            <person name="Fullen J."/>
            <person name="Franchini G."/>
        </authorList>
    </citation>
    <scope>NUCLEOTIDE SEQUENCE [MRNA] (ISOFORMS P30II AND P13II)</scope>
    <scope>SUBCELLULAR LOCATION OF P13II AND P30II</scope>
    <source>
        <strain>Isolate LAF</strain>
    </source>
</reference>
<reference key="3">
    <citation type="journal article" date="1992" name="Proc. Natl. Acad. Sci. U.S.A.">
        <title>Protein isoforms encoded by the pX region of human T-cell leukemia/lymphotropic virus type I.</title>
        <authorList>
            <person name="Koralnik I.J."/>
            <person name="Gessain A."/>
            <person name="Klotman M.E."/>
            <person name="Lo Monico A."/>
            <person name="Berneman Z.N."/>
            <person name="Franchini G."/>
        </authorList>
    </citation>
    <scope>ALTERNATIVE SPLICING (ISOFORMS P30II AND P13II)</scope>
    <source>
        <strain>Isolate LAF</strain>
    </source>
</reference>
<reference key="4">
    <citation type="journal article" date="2001" name="J. Virol.">
        <title>Human T-lymphotropic virus type 1 p30(II) regulates gene transcription by binding CREB binding protein/p300.</title>
        <authorList>
            <person name="Zhang W."/>
            <person name="Nisbet J.W."/>
            <person name="Albrecht B."/>
            <person name="Ding W."/>
            <person name="Kashanchi F."/>
            <person name="Bartoe J.T."/>
            <person name="Lairmore M.D."/>
        </authorList>
    </citation>
    <scope>INTERACTION OF P30II WITH HUMAN CREBBP AND EP300</scope>
</reference>
<reference key="5">
    <citation type="journal article" date="2002" name="J. Biol. Chem.">
        <title>Mitochondrial alterations induced by the p13II protein of human T-cell leukemia virus type 1. Critical role of arginine residues.</title>
        <authorList>
            <person name="D'Agostino D.M."/>
            <person name="Ranzato L."/>
            <person name="Arrigoni G."/>
            <person name="Cavallari I."/>
            <person name="Belleudi F."/>
            <person name="Torrisi M.R."/>
            <person name="Silic-Benussi M."/>
            <person name="Ferro T."/>
            <person name="Petronilli V."/>
            <person name="Marin O."/>
            <person name="Chieco-Bianchi L."/>
            <person name="Bernardi P."/>
            <person name="Ciminale V."/>
        </authorList>
    </citation>
    <scope>FUNCTION OF P13II</scope>
</reference>
<reference key="6">
    <citation type="journal article" date="2004" name="Nat. Med.">
        <title>HTLV-1-encoded p30II is a post-transcriptional negative regulator of viral replication.</title>
        <authorList>
            <person name="Nicot C."/>
            <person name="Dundr M."/>
            <person name="Johnson J.M."/>
            <person name="Fullen J.R."/>
            <person name="Alonzo N."/>
            <person name="Fukumoto R."/>
            <person name="Princler G.L."/>
            <person name="Derse D."/>
            <person name="Misteli T."/>
            <person name="Franchini G."/>
        </authorList>
    </citation>
    <scope>FUNCTION OF P30II</scope>
</reference>
<reference key="7">
    <citation type="journal article" date="2005" name="Oncogene">
        <title>Human T-cell leukemia/lymphoma virus type 1 nonstructural genes and their functions.</title>
        <authorList>
            <person name="Nicot C."/>
            <person name="Harrod R.L."/>
            <person name="Ciminale V."/>
            <person name="Franchini G."/>
        </authorList>
    </citation>
    <scope>REVIEW</scope>
</reference>
<reference key="8">
    <citation type="journal article" date="2005" name="Cell Death Differ.">
        <title>The human T-cell leukemia virus type 1 p13II protein: effects on mitochondrial function and cell growth.</title>
        <authorList>
            <person name="D'Agostino D.M."/>
            <person name="Silic-Benussi M."/>
            <person name="Hiraragi H."/>
            <person name="Lairmore M.D."/>
            <person name="Ciminale V."/>
        </authorList>
    </citation>
    <scope>REVIEW</scope>
</reference>
<evidence type="ECO:0000255" key="1"/>
<evidence type="ECO:0000256" key="2">
    <source>
        <dbReference type="SAM" id="MobiDB-lite"/>
    </source>
</evidence>
<evidence type="ECO:0000269" key="3">
    <source>
    </source>
</evidence>
<evidence type="ECO:0000269" key="4">
    <source>
    </source>
</evidence>
<evidence type="ECO:0000303" key="5">
    <source>
    </source>
</evidence>
<evidence type="ECO:0000305" key="6"/>
<accession>P0C214</accession>